<proteinExistence type="evidence at protein level"/>
<name>DAF11_CAEEL</name>
<protein>
    <recommendedName>
        <fullName evidence="23">Receptor-type guanylate cyclase daf-11</fullName>
        <ecNumber evidence="15">4.6.1.2</ecNumber>
    </recommendedName>
    <alternativeName>
        <fullName evidence="25">Abnormal dauer formation protein 11</fullName>
    </alternativeName>
</protein>
<comment type="function">
    <text evidence="6 7 8 9 10 11 12 14 15 16 17 18 19 20 21">Guanylate cyclase involved in the production of the second messenger cGMP (PubMed:24015261). In addition, regulates cGMP levels by controlling the transcription of 3',5'-cyclic phosphodiesterase pde-1 and pde-5 mRNAs (PubMed:19489741, PubMed:24015261). Involved in the olfactory, light and pheromone sensing pathways. Part of the chemosensory mechanism of the ASJ sensory neuron that controls dauer formation and dauer recovery (PubMed:1732156, PubMed:21304598, PubMed:8893028). Promotes the calcium flux in ASJ sensory neurons in response to onset and removal of a nitric oxide (NO) stimulus and is thereby required for the behavioral avoidance response to NO-producing organisms like P.aeruginosa (PubMed:30014846). In ASI and ASJ sensory neurons, controls dauer formation and behavioral response to P.aeruginosa by up-regulating the transcription of daf-7, a member of the TGF-beta family (PubMed:11677050, PubMed:25303524). Required for the chemotaxis responses to non-volatile and volatile attractants mediated by the sensory neurons ASE and AWC respectively (PubMed:10790386, PubMed:7828815). Required in ASJ neurons for phototransduction downstream of G protein coupled-photoreceptor lite-1 (PubMed:20436480). Plays a role in the development of ASJ sensory neuron axons during late larval stages and in the maintenance of normal axon morphology in adults (PubMed:9486798). Required to maintain the expression of putative olfactory receptor str-2 in one of the two AWC neurons in adults (PubMed:10571181). Regulates, via the production of cGMP, lifespan (in some environmental conditions), sensitivity to oxidative stress and entry into quiescence triggered by satiety (PubMed:18316030, PubMed:19489741, PubMed:24015261). In AWB and AWC sensory neurons, mediates the recognition of food odors which subsequently allows for the detection of preferred food sources (PubMed:25009271).</text>
</comment>
<comment type="catalytic activity">
    <reaction evidence="15">
        <text>GTP = 3',5'-cyclic GMP + diphosphate</text>
        <dbReference type="Rhea" id="RHEA:13665"/>
        <dbReference type="ChEBI" id="CHEBI:33019"/>
        <dbReference type="ChEBI" id="CHEBI:37565"/>
        <dbReference type="ChEBI" id="CHEBI:57746"/>
        <dbReference type="EC" id="4.6.1.2"/>
    </reaction>
</comment>
<comment type="subcellular location">
    <subcellularLocation>
        <location evidence="22">Cell membrane</location>
        <topology evidence="22">Single-pass membrane protein</topology>
    </subcellularLocation>
    <subcellularLocation>
        <location evidence="7">Cell projection</location>
        <location evidence="7">Dendrite</location>
    </subcellularLocation>
    <subcellularLocation>
        <location evidence="7">Cell projection</location>
        <location evidence="7">Cilium</location>
    </subcellularLocation>
    <subcellularLocation>
        <location evidence="7">Perikaryon</location>
    </subcellularLocation>
    <text evidence="7 13">Expressed preferentially in ciliated endings of sensory neurons (PubMed:10790386). Cilium localization is regulated by daf-25 (PubMed:21124868).</text>
</comment>
<comment type="tissue specificity">
    <text evidence="7">Expressed in sensory neurons including ASI, ASJ, ASK, AWB and AWC. Expressed in ASJ neurons in the dauer stage.</text>
</comment>
<comment type="domain">
    <text evidence="3">The protein kinase domain is predicted to be catalytically inactive.</text>
</comment>
<comment type="disruption phenotype">
    <text evidence="16">RNAi-mediated knockdown in AWB and AWC sensory neurons results in a defective preference between different food odors.</text>
</comment>
<comment type="similarity">
    <text evidence="2">Belongs to the adenylyl cyclase class-4/guanylyl cyclase family.</text>
</comment>
<organism evidence="24">
    <name type="scientific">Caenorhabditis elegans</name>
    <dbReference type="NCBI Taxonomy" id="6239"/>
    <lineage>
        <taxon>Eukaryota</taxon>
        <taxon>Metazoa</taxon>
        <taxon>Ecdysozoa</taxon>
        <taxon>Nematoda</taxon>
        <taxon>Chromadorea</taxon>
        <taxon>Rhabditida</taxon>
        <taxon>Rhabditina</taxon>
        <taxon>Rhabditomorpha</taxon>
        <taxon>Rhabditoidea</taxon>
        <taxon>Rhabditidae</taxon>
        <taxon>Peloderinae</taxon>
        <taxon>Caenorhabditis</taxon>
    </lineage>
</organism>
<evidence type="ECO:0000255" key="1"/>
<evidence type="ECO:0000255" key="2">
    <source>
        <dbReference type="PROSITE-ProRule" id="PRU00099"/>
    </source>
</evidence>
<evidence type="ECO:0000255" key="3">
    <source>
        <dbReference type="PROSITE-ProRule" id="PRU00159"/>
    </source>
</evidence>
<evidence type="ECO:0000255" key="4">
    <source>
        <dbReference type="PROSITE-ProRule" id="PRU00498"/>
    </source>
</evidence>
<evidence type="ECO:0000256" key="5">
    <source>
        <dbReference type="SAM" id="MobiDB-lite"/>
    </source>
</evidence>
<evidence type="ECO:0000269" key="6">
    <source>
    </source>
</evidence>
<evidence type="ECO:0000269" key="7">
    <source>
    </source>
</evidence>
<evidence type="ECO:0000269" key="8">
    <source>
    </source>
</evidence>
<evidence type="ECO:0000269" key="9">
    <source>
    </source>
</evidence>
<evidence type="ECO:0000269" key="10">
    <source>
    </source>
</evidence>
<evidence type="ECO:0000269" key="11">
    <source>
    </source>
</evidence>
<evidence type="ECO:0000269" key="12">
    <source>
    </source>
</evidence>
<evidence type="ECO:0000269" key="13">
    <source>
    </source>
</evidence>
<evidence type="ECO:0000269" key="14">
    <source>
    </source>
</evidence>
<evidence type="ECO:0000269" key="15">
    <source>
    </source>
</evidence>
<evidence type="ECO:0000269" key="16">
    <source>
    </source>
</evidence>
<evidence type="ECO:0000269" key="17">
    <source>
    </source>
</evidence>
<evidence type="ECO:0000269" key="18">
    <source>
    </source>
</evidence>
<evidence type="ECO:0000269" key="19">
    <source>
    </source>
</evidence>
<evidence type="ECO:0000269" key="20">
    <source>
    </source>
</evidence>
<evidence type="ECO:0000269" key="21">
    <source>
    </source>
</evidence>
<evidence type="ECO:0000305" key="22"/>
<evidence type="ECO:0000305" key="23">
    <source>
    </source>
</evidence>
<evidence type="ECO:0000312" key="24">
    <source>
        <dbReference type="Proteomes" id="UP000001940"/>
    </source>
</evidence>
<evidence type="ECO:0000312" key="25">
    <source>
        <dbReference type="WormBase" id="B0240.3a"/>
    </source>
</evidence>
<dbReference type="EC" id="4.6.1.2" evidence="15"/>
<dbReference type="EMBL" id="BX284605">
    <property type="protein sequence ID" value="CAD56284.3"/>
    <property type="molecule type" value="Genomic_DNA"/>
</dbReference>
<dbReference type="RefSeq" id="NP_505960.3">
    <property type="nucleotide sequence ID" value="NM_073559.8"/>
</dbReference>
<dbReference type="SMR" id="Q8I4N4"/>
<dbReference type="FunCoup" id="Q8I4N4">
    <property type="interactions" value="7"/>
</dbReference>
<dbReference type="STRING" id="6239.B0240.3a.1"/>
<dbReference type="GlyCosmos" id="Q8I4N4">
    <property type="glycosylation" value="4 sites, No reported glycans"/>
</dbReference>
<dbReference type="PaxDb" id="6239-B0240.3"/>
<dbReference type="EnsemblMetazoa" id="B0240.3a.1">
    <property type="protein sequence ID" value="B0240.3a.1"/>
    <property type="gene ID" value="WBGene00000907"/>
</dbReference>
<dbReference type="GeneID" id="179605"/>
<dbReference type="KEGG" id="cel:CELE_B0240.3"/>
<dbReference type="UCSC" id="B0240.3">
    <property type="organism name" value="c. elegans"/>
</dbReference>
<dbReference type="AGR" id="WB:WBGene00000907"/>
<dbReference type="CTD" id="179605"/>
<dbReference type="WormBase" id="B0240.3a">
    <property type="protein sequence ID" value="CE42996"/>
    <property type="gene ID" value="WBGene00000907"/>
    <property type="gene designation" value="daf-11"/>
</dbReference>
<dbReference type="eggNOG" id="KOG1023">
    <property type="taxonomic scope" value="Eukaryota"/>
</dbReference>
<dbReference type="HOGENOM" id="CLU_001072_1_3_1"/>
<dbReference type="InParanoid" id="Q8I4N4"/>
<dbReference type="OMA" id="FTEDHTP"/>
<dbReference type="OrthoDB" id="1890790at2759"/>
<dbReference type="PhylomeDB" id="Q8I4N4"/>
<dbReference type="Reactome" id="R-CEL-2514859">
    <property type="pathway name" value="Inactivation, recovery and regulation of the phototransduction cascade"/>
</dbReference>
<dbReference type="PRO" id="PR:Q8I4N4"/>
<dbReference type="Proteomes" id="UP000001940">
    <property type="component" value="Chromosome V"/>
</dbReference>
<dbReference type="Bgee" id="WBGene00000907">
    <property type="expression patterns" value="Expressed in pharyngeal muscle cell (C elegans) and 2 other cell types or tissues"/>
</dbReference>
<dbReference type="ExpressionAtlas" id="Q8I4N4">
    <property type="expression patterns" value="baseline and differential"/>
</dbReference>
<dbReference type="GO" id="GO:0030425">
    <property type="term" value="C:dendrite"/>
    <property type="evidence" value="ECO:0000314"/>
    <property type="project" value="WormBase"/>
</dbReference>
<dbReference type="GO" id="GO:0043025">
    <property type="term" value="C:neuronal cell body"/>
    <property type="evidence" value="ECO:0000314"/>
    <property type="project" value="WormBase"/>
</dbReference>
<dbReference type="GO" id="GO:0097730">
    <property type="term" value="C:non-motile cilium"/>
    <property type="evidence" value="ECO:0000314"/>
    <property type="project" value="WormBase"/>
</dbReference>
<dbReference type="GO" id="GO:0043204">
    <property type="term" value="C:perikaryon"/>
    <property type="evidence" value="ECO:0007669"/>
    <property type="project" value="UniProtKB-SubCell"/>
</dbReference>
<dbReference type="GO" id="GO:0005886">
    <property type="term" value="C:plasma membrane"/>
    <property type="evidence" value="ECO:0000318"/>
    <property type="project" value="GO_Central"/>
</dbReference>
<dbReference type="GO" id="GO:0005524">
    <property type="term" value="F:ATP binding"/>
    <property type="evidence" value="ECO:0007669"/>
    <property type="project" value="InterPro"/>
</dbReference>
<dbReference type="GO" id="GO:0005525">
    <property type="term" value="F:GTP binding"/>
    <property type="evidence" value="ECO:0007669"/>
    <property type="project" value="UniProtKB-KW"/>
</dbReference>
<dbReference type="GO" id="GO:0004383">
    <property type="term" value="F:guanylate cyclase activity"/>
    <property type="evidence" value="ECO:0000250"/>
    <property type="project" value="WormBase"/>
</dbReference>
<dbReference type="GO" id="GO:0046872">
    <property type="term" value="F:metal ion binding"/>
    <property type="evidence" value="ECO:0007669"/>
    <property type="project" value="UniProtKB-KW"/>
</dbReference>
<dbReference type="GO" id="GO:0001653">
    <property type="term" value="F:peptide receptor activity"/>
    <property type="evidence" value="ECO:0000318"/>
    <property type="project" value="GO_Central"/>
</dbReference>
<dbReference type="GO" id="GO:0004672">
    <property type="term" value="F:protein kinase activity"/>
    <property type="evidence" value="ECO:0007669"/>
    <property type="project" value="InterPro"/>
</dbReference>
<dbReference type="GO" id="GO:0071321">
    <property type="term" value="P:cellular response to cGMP"/>
    <property type="evidence" value="ECO:0000315"/>
    <property type="project" value="UniProtKB"/>
</dbReference>
<dbReference type="GO" id="GO:0006182">
    <property type="term" value="P:cGMP biosynthetic process"/>
    <property type="evidence" value="ECO:0000250"/>
    <property type="project" value="WormBase"/>
</dbReference>
<dbReference type="GO" id="GO:0006935">
    <property type="term" value="P:chemotaxis"/>
    <property type="evidence" value="ECO:0000316"/>
    <property type="project" value="UniProtKB"/>
</dbReference>
<dbReference type="GO" id="GO:0060271">
    <property type="term" value="P:cilium assembly"/>
    <property type="evidence" value="ECO:0000316"/>
    <property type="project" value="UniProtKB"/>
</dbReference>
<dbReference type="GO" id="GO:0040024">
    <property type="term" value="P:dauer larval development"/>
    <property type="evidence" value="ECO:0000315"/>
    <property type="project" value="WormBase"/>
</dbReference>
<dbReference type="GO" id="GO:0008340">
    <property type="term" value="P:determination of adult lifespan"/>
    <property type="evidence" value="ECO:0000315"/>
    <property type="project" value="UniProtKB"/>
</dbReference>
<dbReference type="GO" id="GO:0035556">
    <property type="term" value="P:intracellular signal transduction"/>
    <property type="evidence" value="ECO:0007669"/>
    <property type="project" value="InterPro"/>
</dbReference>
<dbReference type="GO" id="GO:0061067">
    <property type="term" value="P:negative regulation of dauer larval development"/>
    <property type="evidence" value="ECO:0000315"/>
    <property type="project" value="UniProtKB"/>
</dbReference>
<dbReference type="GO" id="GO:0007399">
    <property type="term" value="P:nervous system development"/>
    <property type="evidence" value="ECO:0007669"/>
    <property type="project" value="UniProtKB-KW"/>
</dbReference>
<dbReference type="GO" id="GO:0008355">
    <property type="term" value="P:olfactory learning"/>
    <property type="evidence" value="ECO:0000315"/>
    <property type="project" value="WormBase"/>
</dbReference>
<dbReference type="GO" id="GO:0007602">
    <property type="term" value="P:phototransduction"/>
    <property type="evidence" value="ECO:0000315"/>
    <property type="project" value="UniProtKB"/>
</dbReference>
<dbReference type="GO" id="GO:0010628">
    <property type="term" value="P:positive regulation of gene expression"/>
    <property type="evidence" value="ECO:0000315"/>
    <property type="project" value="UniProtKB"/>
</dbReference>
<dbReference type="GO" id="GO:0030511">
    <property type="term" value="P:positive regulation of transforming growth factor beta receptor signaling pathway"/>
    <property type="evidence" value="ECO:0000315"/>
    <property type="project" value="WormBase"/>
</dbReference>
<dbReference type="GO" id="GO:0007168">
    <property type="term" value="P:receptor guanylyl cyclase signaling pathway"/>
    <property type="evidence" value="ECO:0000315"/>
    <property type="project" value="UniProtKB"/>
</dbReference>
<dbReference type="GO" id="GO:0030516">
    <property type="term" value="P:regulation of axon extension"/>
    <property type="evidence" value="ECO:0000315"/>
    <property type="project" value="WormBase"/>
</dbReference>
<dbReference type="GO" id="GO:0050920">
    <property type="term" value="P:regulation of chemotaxis"/>
    <property type="evidence" value="ECO:0000315"/>
    <property type="project" value="UniProtKB"/>
</dbReference>
<dbReference type="GO" id="GO:0061065">
    <property type="term" value="P:regulation of dauer larval development"/>
    <property type="evidence" value="ECO:0000315"/>
    <property type="project" value="UniProtKB"/>
</dbReference>
<dbReference type="GO" id="GO:0010468">
    <property type="term" value="P:regulation of gene expression"/>
    <property type="evidence" value="ECO:0000315"/>
    <property type="project" value="UniProtKB"/>
</dbReference>
<dbReference type="GO" id="GO:0040014">
    <property type="term" value="P:regulation of multicellular organism growth"/>
    <property type="evidence" value="ECO:0000316"/>
    <property type="project" value="UniProtKB"/>
</dbReference>
<dbReference type="GO" id="GO:0042542">
    <property type="term" value="P:response to hydrogen peroxide"/>
    <property type="evidence" value="ECO:0000315"/>
    <property type="project" value="UniProtKB"/>
</dbReference>
<dbReference type="GO" id="GO:0019236">
    <property type="term" value="P:response to pheromone"/>
    <property type="evidence" value="ECO:0007669"/>
    <property type="project" value="UniProtKB-KW"/>
</dbReference>
<dbReference type="GO" id="GO:0009266">
    <property type="term" value="P:response to temperature stimulus"/>
    <property type="evidence" value="ECO:0000315"/>
    <property type="project" value="UniProtKB"/>
</dbReference>
<dbReference type="GO" id="GO:0007608">
    <property type="term" value="P:sensory perception of smell"/>
    <property type="evidence" value="ECO:0007669"/>
    <property type="project" value="UniProtKB-KW"/>
</dbReference>
<dbReference type="GO" id="GO:0007165">
    <property type="term" value="P:signal transduction"/>
    <property type="evidence" value="ECO:0000315"/>
    <property type="project" value="UniProtKB"/>
</dbReference>
<dbReference type="CDD" id="cd07302">
    <property type="entry name" value="CHD"/>
    <property type="match status" value="1"/>
</dbReference>
<dbReference type="FunFam" id="3.30.70.1230:FF:000035">
    <property type="entry name" value="Guanylate cyclase"/>
    <property type="match status" value="1"/>
</dbReference>
<dbReference type="FunFam" id="1.10.510.10:FF:001510">
    <property type="entry name" value="Receptor-type guanylate cyclase daf-11"/>
    <property type="match status" value="1"/>
</dbReference>
<dbReference type="Gene3D" id="3.40.50.2300">
    <property type="match status" value="1"/>
</dbReference>
<dbReference type="Gene3D" id="6.10.250.780">
    <property type="match status" value="1"/>
</dbReference>
<dbReference type="Gene3D" id="3.30.70.1230">
    <property type="entry name" value="Nucleotide cyclase"/>
    <property type="match status" value="1"/>
</dbReference>
<dbReference type="Gene3D" id="1.10.510.10">
    <property type="entry name" value="Transferase(Phosphotransferase) domain 1"/>
    <property type="match status" value="1"/>
</dbReference>
<dbReference type="InterPro" id="IPR001054">
    <property type="entry name" value="A/G_cyclase"/>
</dbReference>
<dbReference type="InterPro" id="IPR001828">
    <property type="entry name" value="ANF_lig-bd_rcpt"/>
</dbReference>
<dbReference type="InterPro" id="IPR050401">
    <property type="entry name" value="Cyclic_nucleotide_synthase"/>
</dbReference>
<dbReference type="InterPro" id="IPR011009">
    <property type="entry name" value="Kinase-like_dom_sf"/>
</dbReference>
<dbReference type="InterPro" id="IPR029787">
    <property type="entry name" value="Nucleotide_cyclase"/>
</dbReference>
<dbReference type="InterPro" id="IPR028082">
    <property type="entry name" value="Peripla_BP_I"/>
</dbReference>
<dbReference type="InterPro" id="IPR000719">
    <property type="entry name" value="Prot_kinase_dom"/>
</dbReference>
<dbReference type="PANTHER" id="PTHR11920">
    <property type="entry name" value="GUANYLYL CYCLASE"/>
    <property type="match status" value="1"/>
</dbReference>
<dbReference type="PANTHER" id="PTHR11920:SF485">
    <property type="entry name" value="RECEPTOR-TYPE GUANYLATE CYCLASE DAF-11"/>
    <property type="match status" value="1"/>
</dbReference>
<dbReference type="Pfam" id="PF01094">
    <property type="entry name" value="ANF_receptor"/>
    <property type="match status" value="1"/>
</dbReference>
<dbReference type="Pfam" id="PF00211">
    <property type="entry name" value="Guanylate_cyc"/>
    <property type="match status" value="1"/>
</dbReference>
<dbReference type="Pfam" id="PF00069">
    <property type="entry name" value="Pkinase"/>
    <property type="match status" value="1"/>
</dbReference>
<dbReference type="SMART" id="SM00044">
    <property type="entry name" value="CYCc"/>
    <property type="match status" value="1"/>
</dbReference>
<dbReference type="SMART" id="SM00220">
    <property type="entry name" value="S_TKc"/>
    <property type="match status" value="1"/>
</dbReference>
<dbReference type="SUPFAM" id="SSF55073">
    <property type="entry name" value="Nucleotide cyclase"/>
    <property type="match status" value="1"/>
</dbReference>
<dbReference type="SUPFAM" id="SSF53822">
    <property type="entry name" value="Periplasmic binding protein-like I"/>
    <property type="match status" value="1"/>
</dbReference>
<dbReference type="SUPFAM" id="SSF56112">
    <property type="entry name" value="Protein kinase-like (PK-like)"/>
    <property type="match status" value="1"/>
</dbReference>
<dbReference type="PROSITE" id="PS50125">
    <property type="entry name" value="GUANYLATE_CYCLASE_2"/>
    <property type="match status" value="1"/>
</dbReference>
<dbReference type="PROSITE" id="PS50011">
    <property type="entry name" value="PROTEIN_KINASE_DOM"/>
    <property type="match status" value="1"/>
</dbReference>
<gene>
    <name evidence="25" type="primary">daf-11</name>
    <name evidence="25" type="ORF">B0240.3</name>
</gene>
<keyword id="KW-1003">Cell membrane</keyword>
<keyword id="KW-0966">Cell projection</keyword>
<keyword id="KW-0141">cGMP biosynthesis</keyword>
<keyword id="KW-0145">Chemotaxis</keyword>
<keyword id="KW-0175">Coiled coil</keyword>
<keyword id="KW-0325">Glycoprotein</keyword>
<keyword id="KW-0342">GTP-binding</keyword>
<keyword id="KW-0456">Lyase</keyword>
<keyword id="KW-0460">Magnesium</keyword>
<keyword id="KW-0472">Membrane</keyword>
<keyword id="KW-0479">Metal-binding</keyword>
<keyword id="KW-0524">Neurogenesis</keyword>
<keyword id="KW-0547">Nucleotide-binding</keyword>
<keyword id="KW-0552">Olfaction</keyword>
<keyword id="KW-0589">Pheromone response</keyword>
<keyword id="KW-1185">Reference proteome</keyword>
<keyword id="KW-0716">Sensory transduction</keyword>
<keyword id="KW-0732">Signal</keyword>
<keyword id="KW-0804">Transcription</keyword>
<keyword id="KW-0805">Transcription regulation</keyword>
<keyword id="KW-0812">Transmembrane</keyword>
<keyword id="KW-1133">Transmembrane helix</keyword>
<reference evidence="24" key="1">
    <citation type="journal article" date="1998" name="Science">
        <title>Genome sequence of the nematode C. elegans: a platform for investigating biology.</title>
        <authorList>
            <consortium name="The C. elegans sequencing consortium"/>
        </authorList>
    </citation>
    <scope>NUCLEOTIDE SEQUENCE [LARGE SCALE GENOMIC DNA]</scope>
    <source>
        <strain evidence="24">Bristol N2</strain>
    </source>
</reference>
<reference evidence="22" key="2">
    <citation type="journal article" date="1992" name="Genetics">
        <title>Genetic analysis of chemosensory control of dauer formation in Caenorhabditis elegans.</title>
        <authorList>
            <person name="Vowels J.J."/>
            <person name="Thomas J.H."/>
        </authorList>
    </citation>
    <scope>FUNCTION</scope>
    <scope>MUTAGENESIS OF GLY-806 AND SER-866</scope>
</reference>
<reference evidence="22" key="3">
    <citation type="journal article" date="1994" name="Genetics">
        <title>Multiple chemosensory defects in daf-11 and daf-21 mutants of Caenorhabditis elegans.</title>
        <authorList>
            <person name="Vowels J.J."/>
            <person name="Thomas J.H."/>
        </authorList>
    </citation>
    <scope>FUNCTION</scope>
    <scope>MUTAGENESIS OF GLY-806 AND SER-866</scope>
</reference>
<reference evidence="22" key="4">
    <citation type="journal article" date="1996" name="Neuron">
        <title>Chemosensory neurons function in parallel to mediate a pheromone response in C. elegans.</title>
        <authorList>
            <person name="Schackwitz W.S."/>
            <person name="Inoue T."/>
            <person name="Thomas J.H."/>
        </authorList>
    </citation>
    <scope>FUNCTION</scope>
</reference>
<reference evidence="22" key="5">
    <citation type="journal article" date="1998" name="Development">
        <title>A cyclic nucleotide-gated channel inhibits sensory axon outgrowth in larval and adult Caenorhabditis elegans: a distinct pathway for maintenance of sensory axon structure.</title>
        <authorList>
            <person name="Coburn C.M."/>
            <person name="Mori I."/>
            <person name="Ohshima Y."/>
            <person name="Bargmann C.I."/>
        </authorList>
    </citation>
    <scope>FUNCTION</scope>
</reference>
<reference evidence="22" key="6">
    <citation type="journal article" date="1999" name="Cell">
        <title>Lateral signaling mediated by axon contact and calcium entry regulates asymmetric odorant receptor expression in C. elegans.</title>
        <authorList>
            <person name="Troemel E.R."/>
            <person name="Sagasti A."/>
            <person name="Bargmann C.I."/>
        </authorList>
    </citation>
    <scope>FUNCTION</scope>
</reference>
<reference evidence="22" key="7">
    <citation type="journal article" date="2000" name="Genetics">
        <title>A transmembrane guanylyl cyclase (DAF-11) and Hsp90 (DAF-21) regulate a common set of chemosensory behaviors in Caenorhabditis elegans.</title>
        <authorList>
            <person name="Birnby D.A."/>
            <person name="Link E.M."/>
            <person name="Vowels J.J."/>
            <person name="Tian H."/>
            <person name="Colacurcio P.L."/>
            <person name="Thomas J.H."/>
        </authorList>
    </citation>
    <scope>FUNCTION</scope>
    <scope>SUBCELLULAR LOCATION</scope>
    <scope>TISSUE SPECIFICITY</scope>
    <scope>MUTAGENESIS OF GLY-806; SER-866 AND GLY-867</scope>
</reference>
<reference evidence="22" key="8">
    <citation type="journal article" date="2001" name="Mech. Dev.">
        <title>DAF-7/TGF-beta expression required for the normal larval development in C. elegans is controlled by a presumed guanylyl cyclase DAF-11.</title>
        <authorList>
            <person name="Murakami M."/>
            <person name="Koga M."/>
            <person name="Ohshima Y."/>
        </authorList>
    </citation>
    <scope>FUNCTION</scope>
</reference>
<reference evidence="22" key="9">
    <citation type="journal article" date="2008" name="Cell Metab.">
        <title>Insulin, cGMP, and TGF-beta signals regulate food intake and quiescence in C. elegans: a model for satiety.</title>
        <authorList>
            <person name="You Y.J."/>
            <person name="Kim J."/>
            <person name="Raizen D.M."/>
            <person name="Avery L."/>
        </authorList>
    </citation>
    <scope>FUNCTION</scope>
</reference>
<reference evidence="22" key="10">
    <citation type="journal article" date="2009" name="Aging Cell">
        <title>Endogenous cGMP regulates adult longevity via the insulin signaling pathway in Caenorhabditis elegans.</title>
        <authorList>
            <person name="Hahm J.H."/>
            <person name="Kim S."/>
            <person name="Paik Y.K."/>
        </authorList>
    </citation>
    <scope>FUNCTION</scope>
</reference>
<reference evidence="22" key="11">
    <citation type="journal article" date="2010" name="Nat. Neurosci.">
        <title>C. elegans phototransduction requires a G protein-dependent cGMP pathway and a taste receptor homolog.</title>
        <authorList>
            <person name="Liu J."/>
            <person name="Ward A."/>
            <person name="Gao J."/>
            <person name="Dong Y."/>
            <person name="Nishio N."/>
            <person name="Inada H."/>
            <person name="Kang L."/>
            <person name="Yu Y."/>
            <person name="Ma D."/>
            <person name="Xu T."/>
            <person name="Mori I."/>
            <person name="Xie Z."/>
            <person name="Xu X.Z."/>
        </authorList>
    </citation>
    <scope>FUNCTION</scope>
</reference>
<reference evidence="22" key="12">
    <citation type="journal article" date="2010" name="PLoS Genet.">
        <title>Localization of a guanylyl cyclase to chemosensory cilia requires the novel ciliary MYND domain protein DAF-25.</title>
        <authorList>
            <person name="Jensen V.L."/>
            <person name="Bialas N.J."/>
            <person name="Bishop-Hurley S.L."/>
            <person name="Molday L.L."/>
            <person name="Kida K."/>
            <person name="Nguyen P.A."/>
            <person name="Blacque O.E."/>
            <person name="Molday R.S."/>
            <person name="Leroux M.R."/>
            <person name="Riddle D.L."/>
        </authorList>
    </citation>
    <scope>SUBCELLULAR LOCATION</scope>
</reference>
<reference evidence="22" key="13">
    <citation type="journal article" date="2013" name="PLoS ONE">
        <title>The receptor-bound guanylyl cyclase DAF-11 is the mediator of hydrogen peroxide-induced cGMP increase in Caenorhabditis elegans.</title>
        <authorList>
            <person name="Beckert U."/>
            <person name="Aw W.Y."/>
            <person name="Burhenne H."/>
            <person name="Forsterling L."/>
            <person name="Kaever V."/>
            <person name="Timmons L."/>
            <person name="Seifert R."/>
        </authorList>
    </citation>
    <scope>FUNCTION</scope>
    <scope>CATALYTIC ACTIVITY</scope>
</reference>
<reference evidence="22" key="14">
    <citation type="journal article" date="2014" name="Cell">
        <title>Chemosensation of bacterial secondary metabolites modulates neuroendocrine signaling and behavior of C. elegans.</title>
        <authorList>
            <person name="Meisel J.D."/>
            <person name="Panda O."/>
            <person name="Mahanti P."/>
            <person name="Schroeder F.C."/>
            <person name="Kim D.H."/>
        </authorList>
    </citation>
    <scope>FUNCTION</scope>
</reference>
<reference key="15">
    <citation type="journal article" date="2014" name="J. Neurosci.">
        <title>Dissecting the signaling mechanisms underlying recognition and preference of food odors.</title>
        <authorList>
            <person name="Harris G."/>
            <person name="Shen Y."/>
            <person name="Ha H."/>
            <person name="Donato A."/>
            <person name="Wallis S."/>
            <person name="Zhang X."/>
            <person name="Zhang Y."/>
        </authorList>
    </citation>
    <scope>FUNCTION</scope>
    <scope>DISRUPTION PHENOTYPE</scope>
</reference>
<reference key="16">
    <citation type="journal article" date="2011" name="PLoS ONE">
        <title>The thioredoxin TRX-1 modulates the function of the insulin-like neuropeptide DAF-28 during dauer formation in Caenorhabditis elegans.</title>
        <authorList>
            <person name="Fierro-Gonzalez J.C."/>
            <person name="Cornils A."/>
            <person name="Alcedo J."/>
            <person name="Miranda-Vizuete A."/>
            <person name="Swoboda P."/>
        </authorList>
    </citation>
    <scope>FUNCTION</scope>
    <scope>MUTAGENESIS OF ASP-770</scope>
</reference>
<reference key="17">
    <citation type="journal article" date="2018" name="Elife">
        <title>Thioredoxin shapes the C. elegans sensory response to Pseudomonas produced nitric oxide.</title>
        <authorList>
            <person name="Hao Y."/>
            <person name="Yang W."/>
            <person name="Ren J."/>
            <person name="Hall Q."/>
            <person name="Zhang Y."/>
            <person name="Kaplan J.M."/>
        </authorList>
    </citation>
    <scope>FUNCTION</scope>
    <scope>MUTAGENESIS OF 723-ARG--MET-739</scope>
</reference>
<feature type="signal peptide" evidence="22">
    <location>
        <begin position="1"/>
        <end status="unknown"/>
    </location>
</feature>
<feature type="chain" id="PRO_0000433297" description="Receptor-type guanylate cyclase daf-11" evidence="22">
    <location>
        <begin status="unknown"/>
        <end position="1077"/>
    </location>
</feature>
<feature type="topological domain" description="Extracellular" evidence="1">
    <location>
        <begin status="unknown"/>
        <end position="334"/>
    </location>
</feature>
<feature type="transmembrane region" description="Helical" evidence="1">
    <location>
        <begin position="335"/>
        <end position="355"/>
    </location>
</feature>
<feature type="topological domain" description="Cytoplasmic" evidence="1">
    <location>
        <begin position="356"/>
        <end position="1077"/>
    </location>
</feature>
<feature type="domain" description="Protein kinase" evidence="3">
    <location>
        <begin position="355"/>
        <end position="695"/>
    </location>
</feature>
<feature type="domain" description="Guanylate cyclase" evidence="2">
    <location>
        <begin position="765"/>
        <end position="895"/>
    </location>
</feature>
<feature type="region of interest" description="Disordered" evidence="5">
    <location>
        <begin position="1048"/>
        <end position="1077"/>
    </location>
</feature>
<feature type="coiled-coil region" evidence="1">
    <location>
        <begin position="983"/>
        <end position="1034"/>
    </location>
</feature>
<feature type="binding site" evidence="2">
    <location>
        <position position="770"/>
    </location>
    <ligand>
        <name>Mg(2+)</name>
        <dbReference type="ChEBI" id="CHEBI:18420"/>
        <label>1</label>
    </ligand>
</feature>
<feature type="binding site" evidence="2">
    <location>
        <position position="770"/>
    </location>
    <ligand>
        <name>Mg(2+)</name>
        <dbReference type="ChEBI" id="CHEBI:18420"/>
        <label>2</label>
    </ligand>
</feature>
<feature type="binding site" evidence="2">
    <location>
        <position position="771"/>
    </location>
    <ligand>
        <name>Mg(2+)</name>
        <dbReference type="ChEBI" id="CHEBI:18420"/>
        <label>2</label>
    </ligand>
</feature>
<feature type="binding site" evidence="2">
    <location>
        <position position="814"/>
    </location>
    <ligand>
        <name>Mg(2+)</name>
        <dbReference type="ChEBI" id="CHEBI:18420"/>
        <label>1</label>
    </ligand>
</feature>
<feature type="binding site" evidence="2">
    <location>
        <position position="814"/>
    </location>
    <ligand>
        <name>Mg(2+)</name>
        <dbReference type="ChEBI" id="CHEBI:18420"/>
        <label>2</label>
    </ligand>
</feature>
<feature type="glycosylation site" description="N-linked (GlcNAc...) asparagine" evidence="4">
    <location>
        <position position="14"/>
    </location>
</feature>
<feature type="glycosylation site" description="N-linked (GlcNAc...) asparagine" evidence="4">
    <location>
        <position position="112"/>
    </location>
</feature>
<feature type="glycosylation site" description="N-linked (GlcNAc...) asparagine" evidence="4">
    <location>
        <position position="149"/>
    </location>
</feature>
<feature type="glycosylation site" description="N-linked (GlcNAc...) asparagine" evidence="4">
    <location>
        <position position="311"/>
    </location>
</feature>
<feature type="mutagenesis site" description="In nu629; abolishes the calcium flux to the cytoplasm in the ASJ sensory neurons in response to the addition and removal of a nitric oxide stimulus." evidence="18">
    <original>RTAELEKEQEKGDQLLM</original>
    <variation>EVGRI</variation>
    <location>
        <begin position="723"/>
        <end position="739"/>
    </location>
</feature>
<feature type="mutagenesis site" description="In ks67; constitutive dauer formation at 25 degrees Celsius." evidence="14">
    <original>D</original>
    <variation>N</variation>
    <location>
        <position position="770"/>
    </location>
</feature>
<feature type="mutagenesis site" description="In m84; constitutive dauer formation with mild defect in dauer recovery. Mild inhibition of chemotaxis responses to some volatile attractants." evidence="7 9 19">
    <original>G</original>
    <variation>E</variation>
    <location>
        <position position="806"/>
    </location>
</feature>
<feature type="mutagenesis site" description="In m87; temperature sensitive constitutive dauer formation with severe defect in dauer recovery. Loss of chemotaxis responses to non-volatile and some volatile attractants." evidence="7 9 19">
    <original>S</original>
    <variation>F</variation>
    <location>
        <position position="866"/>
    </location>
</feature>
<feature type="mutagenesis site" description="In p169; temperature sensitive constitutive dauer formation with severe defect in dauer recovery." evidence="7">
    <original>G</original>
    <variation>R</variation>
    <location>
        <position position="867"/>
    </location>
</feature>
<accession>Q8I4N4</accession>
<sequence>MGPTCSSNFLRFANLTAEMQSLEINILKGYPYEHPTMIDMVTRSPQNLAQNLVSLLRGFEWGQVGAVLCEECYEGDELASEIYFSTIEDIFENNNIALKETVRIGKRENSVNISDAITIFEPSARVILLFLGNKLNDYTEFMTAMSMNNYTTEEYTPVIVISKNSLELTFPWKENDAIAELFDKAIIVYNNCYDKSKISSFLSSYSFSTIEETIISLQMYEGYHLLGYYLYTAITNTTLFNYVQPEKAISSMSIPGPFGEIFINSNGQRIAGYDVLVVDKSLNSNNFIMPLGTISTDKKCPDQACLNFVLNSTSSFEPLKDVPLCGFHGEICDQTGVIIAIAVIMGVLLMFIIILTTIRKCCNGSKGRSISNPWVIPFQDVRFIDLTNTEGSQHMSIQSLQRNMEEKQRLQSLARTKHIATVDQVYVLADKYVMRDKLRYDKIDINLLYQMKSHLQHDNLNSFVGITIDKASHMYIIWNQCFRGSLHDHIFTKERQRGTATRFEGLFLRDILKGLEYIHASAIDFHGNLTLHNCMLDSHWIVKLSGFGVNRLLVKWKTSGQIFTEDHTPVIKSEELHYFDPAMKKIWKNYADRNERALITPQFGKKCDMYSFGVILHEIILKKKFVEQLFDSPREEDDSVLIDDENDAIASRFPLPIIIPEGIEMHNDLIKMLENCFGSVRPDIALARKIIDTVLKMSGSLVDLMIKNLTAYTQGLNETVKNRTAELEKEQEKGDQLLMELLPKSVANDLKNGIAVDPKVYENATILYSDIVGFTSLCSQSQPMEVVTLLSGMYQRFDLIISQQGGYKMETIGDAYCVAAGLPVVMEKDHVKSICMIALLQRDCLHHFEIPHRPGTFLNCRWGFNSGPVFAGVIGQKAPRYACFGEAVILASKMESSGVEDRIQMTLASQQLLEENFPQFVCSNRGGRTIEGIGRILTYWLEGVNAGEQVKVVEFQNDLNDELSRIMKKDGELLAAATALKPKDKMTLAKEKVIAERKNEEERLQRQQTLQEALEEHEEEIEMNEVLVDEDEGEGKPKEVDLTSIVSTQMEELEDEPAGRTIGHGRLDSQASTIPDN</sequence>